<protein>
    <recommendedName>
        <fullName evidence="2">Translation initiation factor IF-2</fullName>
    </recommendedName>
</protein>
<name>IF2_SALG2</name>
<comment type="function">
    <text evidence="2">One of the essential components for the initiation of protein synthesis. Protects formylmethionyl-tRNA from spontaneous hydrolysis and promotes its binding to the 30S ribosomal subunits. Also involved in the hydrolysis of GTP during the formation of the 70S ribosomal complex.</text>
</comment>
<comment type="subcellular location">
    <subcellularLocation>
        <location evidence="2">Cytoplasm</location>
    </subcellularLocation>
</comment>
<comment type="similarity">
    <text evidence="2">Belongs to the TRAFAC class translation factor GTPase superfamily. Classic translation factor GTPase family. IF-2 subfamily.</text>
</comment>
<gene>
    <name evidence="2" type="primary">infB</name>
    <name type="ordered locus">SG3177</name>
</gene>
<feature type="chain" id="PRO_1000093820" description="Translation initiation factor IF-2">
    <location>
        <begin position="1"/>
        <end position="892"/>
    </location>
</feature>
<feature type="domain" description="tr-type G">
    <location>
        <begin position="391"/>
        <end position="560"/>
    </location>
</feature>
<feature type="region of interest" description="Disordered" evidence="3">
    <location>
        <begin position="93"/>
        <end position="304"/>
    </location>
</feature>
<feature type="region of interest" description="G1" evidence="1">
    <location>
        <begin position="400"/>
        <end position="407"/>
    </location>
</feature>
<feature type="region of interest" description="G2" evidence="1">
    <location>
        <begin position="425"/>
        <end position="429"/>
    </location>
</feature>
<feature type="region of interest" description="G3" evidence="1">
    <location>
        <begin position="446"/>
        <end position="449"/>
    </location>
</feature>
<feature type="region of interest" description="G4" evidence="1">
    <location>
        <begin position="500"/>
        <end position="503"/>
    </location>
</feature>
<feature type="region of interest" description="G5" evidence="1">
    <location>
        <begin position="536"/>
        <end position="538"/>
    </location>
</feature>
<feature type="compositionally biased region" description="Basic and acidic residues" evidence="3">
    <location>
        <begin position="93"/>
        <end position="159"/>
    </location>
</feature>
<feature type="compositionally biased region" description="Basic and acidic residues" evidence="3">
    <location>
        <begin position="166"/>
        <end position="216"/>
    </location>
</feature>
<feature type="compositionally biased region" description="Basic residues" evidence="3">
    <location>
        <begin position="254"/>
        <end position="269"/>
    </location>
</feature>
<feature type="compositionally biased region" description="Basic and acidic residues" evidence="3">
    <location>
        <begin position="270"/>
        <end position="282"/>
    </location>
</feature>
<feature type="binding site" evidence="2">
    <location>
        <begin position="400"/>
        <end position="407"/>
    </location>
    <ligand>
        <name>GTP</name>
        <dbReference type="ChEBI" id="CHEBI:37565"/>
    </ligand>
</feature>
<feature type="binding site" evidence="2">
    <location>
        <begin position="446"/>
        <end position="450"/>
    </location>
    <ligand>
        <name>GTP</name>
        <dbReference type="ChEBI" id="CHEBI:37565"/>
    </ligand>
</feature>
<feature type="binding site" evidence="2">
    <location>
        <begin position="500"/>
        <end position="503"/>
    </location>
    <ligand>
        <name>GTP</name>
        <dbReference type="ChEBI" id="CHEBI:37565"/>
    </ligand>
</feature>
<dbReference type="EMBL" id="AM933173">
    <property type="protein sequence ID" value="CAR38976.1"/>
    <property type="molecule type" value="Genomic_DNA"/>
</dbReference>
<dbReference type="RefSeq" id="WP_000133061.1">
    <property type="nucleotide sequence ID" value="NC_011274.1"/>
</dbReference>
<dbReference type="SMR" id="B5REN6"/>
<dbReference type="KEGG" id="seg:SG3177"/>
<dbReference type="HOGENOM" id="CLU_006301_6_3_6"/>
<dbReference type="Proteomes" id="UP000008321">
    <property type="component" value="Chromosome"/>
</dbReference>
<dbReference type="GO" id="GO:0005829">
    <property type="term" value="C:cytosol"/>
    <property type="evidence" value="ECO:0007669"/>
    <property type="project" value="TreeGrafter"/>
</dbReference>
<dbReference type="GO" id="GO:0005525">
    <property type="term" value="F:GTP binding"/>
    <property type="evidence" value="ECO:0007669"/>
    <property type="project" value="UniProtKB-KW"/>
</dbReference>
<dbReference type="GO" id="GO:0003924">
    <property type="term" value="F:GTPase activity"/>
    <property type="evidence" value="ECO:0007669"/>
    <property type="project" value="UniProtKB-UniRule"/>
</dbReference>
<dbReference type="GO" id="GO:0097216">
    <property type="term" value="F:guanosine tetraphosphate binding"/>
    <property type="evidence" value="ECO:0007669"/>
    <property type="project" value="UniProtKB-ARBA"/>
</dbReference>
<dbReference type="GO" id="GO:0003743">
    <property type="term" value="F:translation initiation factor activity"/>
    <property type="evidence" value="ECO:0007669"/>
    <property type="project" value="UniProtKB-UniRule"/>
</dbReference>
<dbReference type="CDD" id="cd01887">
    <property type="entry name" value="IF2_eIF5B"/>
    <property type="match status" value="1"/>
</dbReference>
<dbReference type="CDD" id="cd03702">
    <property type="entry name" value="IF2_mtIF2_II"/>
    <property type="match status" value="1"/>
</dbReference>
<dbReference type="CDD" id="cd03692">
    <property type="entry name" value="mtIF2_IVc"/>
    <property type="match status" value="1"/>
</dbReference>
<dbReference type="FunFam" id="2.40.30.10:FF:000007">
    <property type="entry name" value="Translation initiation factor IF-2"/>
    <property type="match status" value="1"/>
</dbReference>
<dbReference type="FunFam" id="2.40.30.10:FF:000008">
    <property type="entry name" value="Translation initiation factor IF-2"/>
    <property type="match status" value="1"/>
</dbReference>
<dbReference type="FunFam" id="3.30.56.50:FF:000001">
    <property type="entry name" value="Translation initiation factor IF-2"/>
    <property type="match status" value="1"/>
</dbReference>
<dbReference type="FunFam" id="3.40.50.10050:FF:000001">
    <property type="entry name" value="Translation initiation factor IF-2"/>
    <property type="match status" value="1"/>
</dbReference>
<dbReference type="FunFam" id="3.40.50.300:FF:000019">
    <property type="entry name" value="Translation initiation factor IF-2"/>
    <property type="match status" value="1"/>
</dbReference>
<dbReference type="Gene3D" id="3.40.50.300">
    <property type="entry name" value="P-loop containing nucleotide triphosphate hydrolases"/>
    <property type="match status" value="1"/>
</dbReference>
<dbReference type="Gene3D" id="3.30.56.50">
    <property type="entry name" value="Putative DNA-binding domain, N-terminal subdomain of bacterial translation initiation factor IF2"/>
    <property type="match status" value="1"/>
</dbReference>
<dbReference type="Gene3D" id="2.40.30.10">
    <property type="entry name" value="Translation factors"/>
    <property type="match status" value="2"/>
</dbReference>
<dbReference type="Gene3D" id="3.40.50.10050">
    <property type="entry name" value="Translation initiation factor IF- 2, domain 3"/>
    <property type="match status" value="1"/>
</dbReference>
<dbReference type="HAMAP" id="MF_00100_B">
    <property type="entry name" value="IF_2_B"/>
    <property type="match status" value="1"/>
</dbReference>
<dbReference type="InterPro" id="IPR009061">
    <property type="entry name" value="DNA-bd_dom_put_sf"/>
</dbReference>
<dbReference type="InterPro" id="IPR053905">
    <property type="entry name" value="EF-G-like_DII"/>
</dbReference>
<dbReference type="InterPro" id="IPR004161">
    <property type="entry name" value="EFTu-like_2"/>
</dbReference>
<dbReference type="InterPro" id="IPR013575">
    <property type="entry name" value="IF2_assoc_dom_bac"/>
</dbReference>
<dbReference type="InterPro" id="IPR044145">
    <property type="entry name" value="IF2_II"/>
</dbReference>
<dbReference type="InterPro" id="IPR006847">
    <property type="entry name" value="IF2_N"/>
</dbReference>
<dbReference type="InterPro" id="IPR027417">
    <property type="entry name" value="P-loop_NTPase"/>
</dbReference>
<dbReference type="InterPro" id="IPR005225">
    <property type="entry name" value="Small_GTP-bd"/>
</dbReference>
<dbReference type="InterPro" id="IPR000795">
    <property type="entry name" value="T_Tr_GTP-bd_dom"/>
</dbReference>
<dbReference type="InterPro" id="IPR000178">
    <property type="entry name" value="TF_IF2_bacterial-like"/>
</dbReference>
<dbReference type="InterPro" id="IPR015760">
    <property type="entry name" value="TIF_IF2"/>
</dbReference>
<dbReference type="InterPro" id="IPR023115">
    <property type="entry name" value="TIF_IF2_dom3"/>
</dbReference>
<dbReference type="InterPro" id="IPR036925">
    <property type="entry name" value="TIF_IF2_dom3_sf"/>
</dbReference>
<dbReference type="InterPro" id="IPR009000">
    <property type="entry name" value="Transl_B-barrel_sf"/>
</dbReference>
<dbReference type="NCBIfam" id="TIGR00487">
    <property type="entry name" value="IF-2"/>
    <property type="match status" value="1"/>
</dbReference>
<dbReference type="NCBIfam" id="TIGR00231">
    <property type="entry name" value="small_GTP"/>
    <property type="match status" value="1"/>
</dbReference>
<dbReference type="PANTHER" id="PTHR43381:SF5">
    <property type="entry name" value="TR-TYPE G DOMAIN-CONTAINING PROTEIN"/>
    <property type="match status" value="1"/>
</dbReference>
<dbReference type="PANTHER" id="PTHR43381">
    <property type="entry name" value="TRANSLATION INITIATION FACTOR IF-2-RELATED"/>
    <property type="match status" value="1"/>
</dbReference>
<dbReference type="Pfam" id="PF22042">
    <property type="entry name" value="EF-G_D2"/>
    <property type="match status" value="1"/>
</dbReference>
<dbReference type="Pfam" id="PF00009">
    <property type="entry name" value="GTP_EFTU"/>
    <property type="match status" value="1"/>
</dbReference>
<dbReference type="Pfam" id="PF03144">
    <property type="entry name" value="GTP_EFTU_D2"/>
    <property type="match status" value="1"/>
</dbReference>
<dbReference type="Pfam" id="PF11987">
    <property type="entry name" value="IF-2"/>
    <property type="match status" value="1"/>
</dbReference>
<dbReference type="Pfam" id="PF08364">
    <property type="entry name" value="IF2_assoc"/>
    <property type="match status" value="1"/>
</dbReference>
<dbReference type="Pfam" id="PF04760">
    <property type="entry name" value="IF2_N"/>
    <property type="match status" value="2"/>
</dbReference>
<dbReference type="SUPFAM" id="SSF52156">
    <property type="entry name" value="Initiation factor IF2/eIF5b, domain 3"/>
    <property type="match status" value="1"/>
</dbReference>
<dbReference type="SUPFAM" id="SSF52540">
    <property type="entry name" value="P-loop containing nucleoside triphosphate hydrolases"/>
    <property type="match status" value="1"/>
</dbReference>
<dbReference type="SUPFAM" id="SSF46955">
    <property type="entry name" value="Putative DNA-binding domain"/>
    <property type="match status" value="1"/>
</dbReference>
<dbReference type="SUPFAM" id="SSF50447">
    <property type="entry name" value="Translation proteins"/>
    <property type="match status" value="2"/>
</dbReference>
<dbReference type="PROSITE" id="PS51722">
    <property type="entry name" value="G_TR_2"/>
    <property type="match status" value="1"/>
</dbReference>
<dbReference type="PROSITE" id="PS01176">
    <property type="entry name" value="IF2"/>
    <property type="match status" value="1"/>
</dbReference>
<keyword id="KW-0963">Cytoplasm</keyword>
<keyword id="KW-0342">GTP-binding</keyword>
<keyword id="KW-0396">Initiation factor</keyword>
<keyword id="KW-0547">Nucleotide-binding</keyword>
<keyword id="KW-0648">Protein biosynthesis</keyword>
<proteinExistence type="inferred from homology"/>
<accession>B5REN6</accession>
<sequence>MTDVTLKALAAERQVSVDRLVQQFADAGIRKSADDSVSAQEKQTLLAHLNREAVSGPDKLTLQRKTRSTLNIPGTGGKSKSVQIEVRKKRIFVKRDPQEAERLAAEEQAQREAEEQARREAEEQAKREAQQKAEREAAEQAKREAAEKAKREAAEKDKVSNQQTDDMTKTAQAEKARRENEAAELKRKAEEEARRKLEEEARRVAEEARRMAEENKWTATPEPVEDTSDYHVTTSQHARQAEDENDREVEGGRGRGRNAKAARPAKKGKHAESKADREEARAAVRGGKGGKRKGSSLQQGFQKPAQAVNRDVVIGETITVGELANKMAVKGSQVIKAMMKLGAMATINQVIDQETAQLVAEEMGHKVILRRENELEEAVMSDRDTGAAAEPRAPVVTIMGHVDHGKTSLLDYIRSTKVASGEAGGITQHIGAYHVETDNGMITFLDTPGHAAFTSMRARGAQATDIVVLVVAADDGVMPQTIEAIQHAKAAGVPVVVAVNKIDKPEADPDRVKNELSQYGILPEEWGGESQFVHVSAKAGTGIDELLDAILLQAEVLELKAVRKGMASGAVIESFLDKGRGPVATVLVREGTLHKGDIVLCGFEYGRVRAMRNELGQEVLEAGPSIPVEILGLSGVPAAGDEVTVVRDEKKAREVALYRQGKFREVKLARQQKSKLENMFANMTEGEVHEVNIVLKADVQGSVEAISDSLLKLSTDEVKVKIIGSGVGGITETDATLAAASNAILVGFNVRADASARKVIESESLDLRYYSVIYNLIDEVKAAMSGMLSPELKQQIIGLAEVRDVFKSPKFGAIAGCMVTEGTIKRHNPIRVLRDNVVIYEGELESLRRFKDDVNEVRNGMECGIGVKNYNDVRVGDMIEVFEIIEIQRTIA</sequence>
<evidence type="ECO:0000250" key="1"/>
<evidence type="ECO:0000255" key="2">
    <source>
        <dbReference type="HAMAP-Rule" id="MF_00100"/>
    </source>
</evidence>
<evidence type="ECO:0000256" key="3">
    <source>
        <dbReference type="SAM" id="MobiDB-lite"/>
    </source>
</evidence>
<reference key="1">
    <citation type="journal article" date="2008" name="Genome Res.">
        <title>Comparative genome analysis of Salmonella enteritidis PT4 and Salmonella gallinarum 287/91 provides insights into evolutionary and host adaptation pathways.</title>
        <authorList>
            <person name="Thomson N.R."/>
            <person name="Clayton D.J."/>
            <person name="Windhorst D."/>
            <person name="Vernikos G."/>
            <person name="Davidson S."/>
            <person name="Churcher C."/>
            <person name="Quail M.A."/>
            <person name="Stevens M."/>
            <person name="Jones M.A."/>
            <person name="Watson M."/>
            <person name="Barron A."/>
            <person name="Layton A."/>
            <person name="Pickard D."/>
            <person name="Kingsley R.A."/>
            <person name="Bignell A."/>
            <person name="Clark L."/>
            <person name="Harris B."/>
            <person name="Ormond D."/>
            <person name="Abdellah Z."/>
            <person name="Brooks K."/>
            <person name="Cherevach I."/>
            <person name="Chillingworth T."/>
            <person name="Woodward J."/>
            <person name="Norberczak H."/>
            <person name="Lord A."/>
            <person name="Arrowsmith C."/>
            <person name="Jagels K."/>
            <person name="Moule S."/>
            <person name="Mungall K."/>
            <person name="Saunders M."/>
            <person name="Whitehead S."/>
            <person name="Chabalgoity J.A."/>
            <person name="Maskell D."/>
            <person name="Humphreys T."/>
            <person name="Roberts M."/>
            <person name="Barrow P.A."/>
            <person name="Dougan G."/>
            <person name="Parkhill J."/>
        </authorList>
    </citation>
    <scope>NUCLEOTIDE SEQUENCE [LARGE SCALE GENOMIC DNA]</scope>
    <source>
        <strain>287/91 / NCTC 13346</strain>
    </source>
</reference>
<organism>
    <name type="scientific">Salmonella gallinarum (strain 287/91 / NCTC 13346)</name>
    <dbReference type="NCBI Taxonomy" id="550538"/>
    <lineage>
        <taxon>Bacteria</taxon>
        <taxon>Pseudomonadati</taxon>
        <taxon>Pseudomonadota</taxon>
        <taxon>Gammaproteobacteria</taxon>
        <taxon>Enterobacterales</taxon>
        <taxon>Enterobacteriaceae</taxon>
        <taxon>Salmonella</taxon>
    </lineage>
</organism>